<evidence type="ECO:0000255" key="1">
    <source>
        <dbReference type="PROSITE-ProRule" id="PRU00303"/>
    </source>
</evidence>
<evidence type="ECO:0000305" key="2"/>
<dbReference type="EMBL" id="AJ938182">
    <property type="protein sequence ID" value="CAI79981.1"/>
    <property type="molecule type" value="Genomic_DNA"/>
</dbReference>
<dbReference type="SMR" id="Q2YVG5"/>
<dbReference type="KEGG" id="sab:SAB0293"/>
<dbReference type="HOGENOM" id="CLU_050342_0_1_9"/>
<dbReference type="GO" id="GO:0005886">
    <property type="term" value="C:plasma membrane"/>
    <property type="evidence" value="ECO:0007669"/>
    <property type="project" value="UniProtKB-SubCell"/>
</dbReference>
<dbReference type="CDD" id="cd14656">
    <property type="entry name" value="Imelysin-like_EfeO"/>
    <property type="match status" value="1"/>
</dbReference>
<dbReference type="Gene3D" id="1.20.1420.20">
    <property type="entry name" value="M75 peptidase, HXXE motif"/>
    <property type="match status" value="1"/>
</dbReference>
<dbReference type="InterPro" id="IPR050894">
    <property type="entry name" value="EfeM/EfeO_iron_uptake"/>
</dbReference>
<dbReference type="InterPro" id="IPR018976">
    <property type="entry name" value="Imelysin-like"/>
</dbReference>
<dbReference type="InterPro" id="IPR034981">
    <property type="entry name" value="Imelysin-like_EfeO/Algp7"/>
</dbReference>
<dbReference type="InterPro" id="IPR038352">
    <property type="entry name" value="Imelysin_sf"/>
</dbReference>
<dbReference type="InterPro" id="IPR053377">
    <property type="entry name" value="Iron_uptake_EfeM/EfeO"/>
</dbReference>
<dbReference type="NCBIfam" id="NF041757">
    <property type="entry name" value="EfeO"/>
    <property type="match status" value="1"/>
</dbReference>
<dbReference type="PANTHER" id="PTHR39192">
    <property type="entry name" value="IRON UPTAKE SYSTEM COMPONENT EFEO"/>
    <property type="match status" value="1"/>
</dbReference>
<dbReference type="PANTHER" id="PTHR39192:SF1">
    <property type="entry name" value="IRON UPTAKE SYSTEM COMPONENT EFEO"/>
    <property type="match status" value="1"/>
</dbReference>
<dbReference type="Pfam" id="PF09375">
    <property type="entry name" value="Peptidase_M75"/>
    <property type="match status" value="1"/>
</dbReference>
<dbReference type="PROSITE" id="PS51257">
    <property type="entry name" value="PROKAR_LIPOPROTEIN"/>
    <property type="match status" value="1"/>
</dbReference>
<comment type="subcellular location">
    <subcellularLocation>
        <location evidence="1">Cell membrane</location>
        <topology evidence="1">Lipid-anchor</topology>
    </subcellularLocation>
</comment>
<comment type="similarity">
    <text evidence="2">Belongs to the EfeM/EfeO family.</text>
</comment>
<organism>
    <name type="scientific">Staphylococcus aureus (strain bovine RF122 / ET3-1)</name>
    <dbReference type="NCBI Taxonomy" id="273036"/>
    <lineage>
        <taxon>Bacteria</taxon>
        <taxon>Bacillati</taxon>
        <taxon>Bacillota</taxon>
        <taxon>Bacilli</taxon>
        <taxon>Bacillales</taxon>
        <taxon>Staphylococcaceae</taxon>
        <taxon>Staphylococcus</taxon>
    </lineage>
</organism>
<name>EFEMO_STAAB</name>
<accession>Q2YVG5</accession>
<gene>
    <name type="ordered locus">SAB0293</name>
</gene>
<protein>
    <recommendedName>
        <fullName>Efem/EfeO family lipoprotein</fullName>
    </recommendedName>
</protein>
<reference key="1">
    <citation type="journal article" date="2007" name="PLoS ONE">
        <title>Molecular correlates of host specialization in Staphylococcus aureus.</title>
        <authorList>
            <person name="Herron-Olson L."/>
            <person name="Fitzgerald J.R."/>
            <person name="Musser J.M."/>
            <person name="Kapur V."/>
        </authorList>
    </citation>
    <scope>NUCLEOTIDE SEQUENCE [LARGE SCALE GENOMIC DNA]</scope>
    <source>
        <strain>bovine RF122 / ET3-1</strain>
    </source>
</reference>
<keyword id="KW-1003">Cell membrane</keyword>
<keyword id="KW-0449">Lipoprotein</keyword>
<keyword id="KW-0472">Membrane</keyword>
<keyword id="KW-0564">Palmitate</keyword>
<keyword id="KW-0732">Signal</keyword>
<proteinExistence type="inferred from homology"/>
<feature type="signal peptide" evidence="1">
    <location>
        <begin position="1"/>
        <end position="17"/>
    </location>
</feature>
<feature type="chain" id="PRO_0000278309" description="Efem/EfeO family lipoprotein">
    <location>
        <begin position="18"/>
        <end position="284"/>
    </location>
</feature>
<feature type="lipid moiety-binding region" description="N-palmitoyl cysteine" evidence="1">
    <location>
        <position position="18"/>
    </location>
</feature>
<feature type="lipid moiety-binding region" description="S-diacylglycerol cysteine" evidence="1">
    <location>
        <position position="18"/>
    </location>
</feature>
<sequence>MKKLTTLLLASTLLIAACGNDDSKKDDSKTSKKDDGVKAELKQATKAYDKYTDEQLNEFLKGTEKFVKAIENNDMAQAKALYPKVRMYYERSEPVAEAFGDLDPKIDARLADMKEEKKEKEWSGYHKIEKALYEDKKIDDVTKKDAQQLLKDAKELHAKADTLDITPKLMLQGSVDLLNEVATSKITGEEEIYSHTDLYDFKANVEGAQKIYDLFKPILEKKDKKLSDDIQMNFDKVNQLLDKYKDNNGGYESFEKVSKKDRKAFADAVNALGEPLSKMAVITE</sequence>